<evidence type="ECO:0000255" key="1">
    <source>
        <dbReference type="HAMAP-Rule" id="MF_00340"/>
    </source>
</evidence>
<evidence type="ECO:0000305" key="2"/>
<gene>
    <name evidence="1" type="primary">rpmF</name>
    <name type="ordered locus">Athe_1259</name>
</gene>
<feature type="chain" id="PRO_1000195953" description="Large ribosomal subunit protein bL32">
    <location>
        <begin position="1"/>
        <end position="58"/>
    </location>
</feature>
<keyword id="KW-0687">Ribonucleoprotein</keyword>
<keyword id="KW-0689">Ribosomal protein</keyword>
<name>RL32_CALBD</name>
<comment type="similarity">
    <text evidence="1">Belongs to the bacterial ribosomal protein bL32 family.</text>
</comment>
<reference key="1">
    <citation type="submission" date="2009-01" db="EMBL/GenBank/DDBJ databases">
        <title>Complete sequence of chromosome of Caldicellulosiruptor becscii DSM 6725.</title>
        <authorList>
            <person name="Lucas S."/>
            <person name="Copeland A."/>
            <person name="Lapidus A."/>
            <person name="Glavina del Rio T."/>
            <person name="Tice H."/>
            <person name="Bruce D."/>
            <person name="Goodwin L."/>
            <person name="Pitluck S."/>
            <person name="Sims D."/>
            <person name="Meincke L."/>
            <person name="Brettin T."/>
            <person name="Detter J.C."/>
            <person name="Han C."/>
            <person name="Larimer F."/>
            <person name="Land M."/>
            <person name="Hauser L."/>
            <person name="Kyrpides N."/>
            <person name="Ovchinnikova G."/>
            <person name="Kataeva I."/>
            <person name="Adams M.W.W."/>
        </authorList>
    </citation>
    <scope>NUCLEOTIDE SEQUENCE [LARGE SCALE GENOMIC DNA]</scope>
    <source>
        <strain>ATCC BAA-1888 / DSM 6725 / KCTC 15123 / Z-1320</strain>
    </source>
</reference>
<protein>
    <recommendedName>
        <fullName evidence="1">Large ribosomal subunit protein bL32</fullName>
    </recommendedName>
    <alternativeName>
        <fullName evidence="2">50S ribosomal protein L32</fullName>
    </alternativeName>
</protein>
<dbReference type="EMBL" id="CP001393">
    <property type="protein sequence ID" value="ACM60359.1"/>
    <property type="molecule type" value="Genomic_DNA"/>
</dbReference>
<dbReference type="RefSeq" id="WP_013403355.1">
    <property type="nucleotide sequence ID" value="NC_012034.1"/>
</dbReference>
<dbReference type="SMR" id="B9MRQ5"/>
<dbReference type="STRING" id="521460.Athe_1259"/>
<dbReference type="GeneID" id="31772607"/>
<dbReference type="KEGG" id="ate:Athe_1259"/>
<dbReference type="eggNOG" id="COG0333">
    <property type="taxonomic scope" value="Bacteria"/>
</dbReference>
<dbReference type="HOGENOM" id="CLU_129084_1_3_9"/>
<dbReference type="Proteomes" id="UP000007723">
    <property type="component" value="Chromosome"/>
</dbReference>
<dbReference type="GO" id="GO:0015934">
    <property type="term" value="C:large ribosomal subunit"/>
    <property type="evidence" value="ECO:0007669"/>
    <property type="project" value="InterPro"/>
</dbReference>
<dbReference type="GO" id="GO:0003735">
    <property type="term" value="F:structural constituent of ribosome"/>
    <property type="evidence" value="ECO:0007669"/>
    <property type="project" value="InterPro"/>
</dbReference>
<dbReference type="GO" id="GO:0006412">
    <property type="term" value="P:translation"/>
    <property type="evidence" value="ECO:0007669"/>
    <property type="project" value="UniProtKB-UniRule"/>
</dbReference>
<dbReference type="HAMAP" id="MF_00340">
    <property type="entry name" value="Ribosomal_bL32"/>
    <property type="match status" value="1"/>
</dbReference>
<dbReference type="InterPro" id="IPR002677">
    <property type="entry name" value="Ribosomal_bL32"/>
</dbReference>
<dbReference type="InterPro" id="IPR044957">
    <property type="entry name" value="Ribosomal_bL32_bact"/>
</dbReference>
<dbReference type="InterPro" id="IPR011332">
    <property type="entry name" value="Ribosomal_zn-bd"/>
</dbReference>
<dbReference type="NCBIfam" id="TIGR01031">
    <property type="entry name" value="rpmF_bact"/>
    <property type="match status" value="1"/>
</dbReference>
<dbReference type="PANTHER" id="PTHR35534">
    <property type="entry name" value="50S RIBOSOMAL PROTEIN L32"/>
    <property type="match status" value="1"/>
</dbReference>
<dbReference type="PANTHER" id="PTHR35534:SF1">
    <property type="entry name" value="LARGE RIBOSOMAL SUBUNIT PROTEIN BL32"/>
    <property type="match status" value="1"/>
</dbReference>
<dbReference type="Pfam" id="PF01783">
    <property type="entry name" value="Ribosomal_L32p"/>
    <property type="match status" value="1"/>
</dbReference>
<dbReference type="SUPFAM" id="SSF57829">
    <property type="entry name" value="Zn-binding ribosomal proteins"/>
    <property type="match status" value="1"/>
</dbReference>
<sequence>MAQPKRRWSKQRTHKHRANWKLEIPNLTECPQCHEMKLPHRVCPNCGYYRNRKVVNQD</sequence>
<organism>
    <name type="scientific">Caldicellulosiruptor bescii (strain ATCC BAA-1888 / DSM 6725 / KCTC 15123 / Z-1320)</name>
    <name type="common">Anaerocellum thermophilum</name>
    <dbReference type="NCBI Taxonomy" id="521460"/>
    <lineage>
        <taxon>Bacteria</taxon>
        <taxon>Bacillati</taxon>
        <taxon>Bacillota</taxon>
        <taxon>Bacillota incertae sedis</taxon>
        <taxon>Caldicellulosiruptorales</taxon>
        <taxon>Caldicellulosiruptoraceae</taxon>
        <taxon>Caldicellulosiruptor</taxon>
    </lineage>
</organism>
<accession>B9MRQ5</accession>
<proteinExistence type="inferred from homology"/>